<proteinExistence type="evidence at protein level"/>
<name>YPIA_BACSU</name>
<evidence type="ECO:0000269" key="1">
    <source>
    </source>
</evidence>
<reference key="1">
    <citation type="journal article" date="1996" name="Microbiology">
        <title>Sequence analysis of the Bacillus subtilis chromosome region between the serA and kdg loci cloned in a yeast artificial chromosome.</title>
        <authorList>
            <person name="Sorokin A.V."/>
            <person name="Azevedo V."/>
            <person name="Zumstein E."/>
            <person name="Galleron N."/>
            <person name="Ehrlich S.D."/>
            <person name="Serror P."/>
        </authorList>
    </citation>
    <scope>NUCLEOTIDE SEQUENCE [GENOMIC DNA]</scope>
    <source>
        <strain>168 / Marburg / ATCC 6051 / DSM 10 / JCM 1465 / NBRC 13719 / NCIMB 3610 / NRRL NRS-744 / VKM B-501</strain>
    </source>
</reference>
<reference key="2">
    <citation type="journal article" date="1997" name="Nature">
        <title>The complete genome sequence of the Gram-positive bacterium Bacillus subtilis.</title>
        <authorList>
            <person name="Kunst F."/>
            <person name="Ogasawara N."/>
            <person name="Moszer I."/>
            <person name="Albertini A.M."/>
            <person name="Alloni G."/>
            <person name="Azevedo V."/>
            <person name="Bertero M.G."/>
            <person name="Bessieres P."/>
            <person name="Bolotin A."/>
            <person name="Borchert S."/>
            <person name="Borriss R."/>
            <person name="Boursier L."/>
            <person name="Brans A."/>
            <person name="Braun M."/>
            <person name="Brignell S.C."/>
            <person name="Bron S."/>
            <person name="Brouillet S."/>
            <person name="Bruschi C.V."/>
            <person name="Caldwell B."/>
            <person name="Capuano V."/>
            <person name="Carter N.M."/>
            <person name="Choi S.-K."/>
            <person name="Codani J.-J."/>
            <person name="Connerton I.F."/>
            <person name="Cummings N.J."/>
            <person name="Daniel R.A."/>
            <person name="Denizot F."/>
            <person name="Devine K.M."/>
            <person name="Duesterhoeft A."/>
            <person name="Ehrlich S.D."/>
            <person name="Emmerson P.T."/>
            <person name="Entian K.-D."/>
            <person name="Errington J."/>
            <person name="Fabret C."/>
            <person name="Ferrari E."/>
            <person name="Foulger D."/>
            <person name="Fritz C."/>
            <person name="Fujita M."/>
            <person name="Fujita Y."/>
            <person name="Fuma S."/>
            <person name="Galizzi A."/>
            <person name="Galleron N."/>
            <person name="Ghim S.-Y."/>
            <person name="Glaser P."/>
            <person name="Goffeau A."/>
            <person name="Golightly E.J."/>
            <person name="Grandi G."/>
            <person name="Guiseppi G."/>
            <person name="Guy B.J."/>
            <person name="Haga K."/>
            <person name="Haiech J."/>
            <person name="Harwood C.R."/>
            <person name="Henaut A."/>
            <person name="Hilbert H."/>
            <person name="Holsappel S."/>
            <person name="Hosono S."/>
            <person name="Hullo M.-F."/>
            <person name="Itaya M."/>
            <person name="Jones L.-M."/>
            <person name="Joris B."/>
            <person name="Karamata D."/>
            <person name="Kasahara Y."/>
            <person name="Klaerr-Blanchard M."/>
            <person name="Klein C."/>
            <person name="Kobayashi Y."/>
            <person name="Koetter P."/>
            <person name="Koningstein G."/>
            <person name="Krogh S."/>
            <person name="Kumano M."/>
            <person name="Kurita K."/>
            <person name="Lapidus A."/>
            <person name="Lardinois S."/>
            <person name="Lauber J."/>
            <person name="Lazarevic V."/>
            <person name="Lee S.-M."/>
            <person name="Levine A."/>
            <person name="Liu H."/>
            <person name="Masuda S."/>
            <person name="Mauel C."/>
            <person name="Medigue C."/>
            <person name="Medina N."/>
            <person name="Mellado R.P."/>
            <person name="Mizuno M."/>
            <person name="Moestl D."/>
            <person name="Nakai S."/>
            <person name="Noback M."/>
            <person name="Noone D."/>
            <person name="O'Reilly M."/>
            <person name="Ogawa K."/>
            <person name="Ogiwara A."/>
            <person name="Oudega B."/>
            <person name="Park S.-H."/>
            <person name="Parro V."/>
            <person name="Pohl T.M."/>
            <person name="Portetelle D."/>
            <person name="Porwollik S."/>
            <person name="Prescott A.M."/>
            <person name="Presecan E."/>
            <person name="Pujic P."/>
            <person name="Purnelle B."/>
            <person name="Rapoport G."/>
            <person name="Rey M."/>
            <person name="Reynolds S."/>
            <person name="Rieger M."/>
            <person name="Rivolta C."/>
            <person name="Rocha E."/>
            <person name="Roche B."/>
            <person name="Rose M."/>
            <person name="Sadaie Y."/>
            <person name="Sato T."/>
            <person name="Scanlan E."/>
            <person name="Schleich S."/>
            <person name="Schroeter R."/>
            <person name="Scoffone F."/>
            <person name="Sekiguchi J."/>
            <person name="Sekowska A."/>
            <person name="Seror S.J."/>
            <person name="Serror P."/>
            <person name="Shin B.-S."/>
            <person name="Soldo B."/>
            <person name="Sorokin A."/>
            <person name="Tacconi E."/>
            <person name="Takagi T."/>
            <person name="Takahashi H."/>
            <person name="Takemaru K."/>
            <person name="Takeuchi M."/>
            <person name="Tamakoshi A."/>
            <person name="Tanaka T."/>
            <person name="Terpstra P."/>
            <person name="Tognoni A."/>
            <person name="Tosato V."/>
            <person name="Uchiyama S."/>
            <person name="Vandenbol M."/>
            <person name="Vannier F."/>
            <person name="Vassarotti A."/>
            <person name="Viari A."/>
            <person name="Wambutt R."/>
            <person name="Wedler E."/>
            <person name="Wedler H."/>
            <person name="Weitzenegger T."/>
            <person name="Winters P."/>
            <person name="Wipat A."/>
            <person name="Yamamoto H."/>
            <person name="Yamane K."/>
            <person name="Yasumoto K."/>
            <person name="Yata K."/>
            <person name="Yoshida K."/>
            <person name="Yoshikawa H.-F."/>
            <person name="Zumstein E."/>
            <person name="Yoshikawa H."/>
            <person name="Danchin A."/>
        </authorList>
    </citation>
    <scope>NUCLEOTIDE SEQUENCE [LARGE SCALE GENOMIC DNA]</scope>
    <source>
        <strain>168</strain>
    </source>
</reference>
<reference key="3">
    <citation type="journal article" date="2011" name="Proteomics">
        <title>The dynamic protein partnership of RNA polymerase in Bacillus subtilis.</title>
        <authorList>
            <person name="Delumeau O."/>
            <person name="Lecointe F."/>
            <person name="Muntel J."/>
            <person name="Guillot A."/>
            <person name="Guedon E."/>
            <person name="Monnet V."/>
            <person name="Hecker M."/>
            <person name="Becher D."/>
            <person name="Polard P."/>
            <person name="Noirot P."/>
        </authorList>
    </citation>
    <scope>SUBUNIT</scope>
    <source>
        <strain>168</strain>
    </source>
</reference>
<gene>
    <name type="primary">ypiA</name>
    <name type="ordered locus">BSU22590</name>
</gene>
<dbReference type="EMBL" id="L47709">
    <property type="protein sequence ID" value="AAB38432.1"/>
    <property type="molecule type" value="Genomic_DNA"/>
</dbReference>
<dbReference type="EMBL" id="AL009126">
    <property type="protein sequence ID" value="CAB14175.1"/>
    <property type="molecule type" value="Genomic_DNA"/>
</dbReference>
<dbReference type="PIR" id="E69936">
    <property type="entry name" value="E69936"/>
</dbReference>
<dbReference type="RefSeq" id="NP_390140.1">
    <property type="nucleotide sequence ID" value="NC_000964.3"/>
</dbReference>
<dbReference type="RefSeq" id="WP_003230620.1">
    <property type="nucleotide sequence ID" value="NZ_OZ025638.1"/>
</dbReference>
<dbReference type="SMR" id="P54389"/>
<dbReference type="FunCoup" id="P54389">
    <property type="interactions" value="18"/>
</dbReference>
<dbReference type="STRING" id="224308.BSU22590"/>
<dbReference type="PaxDb" id="224308-BSU22590"/>
<dbReference type="EnsemblBacteria" id="CAB14175">
    <property type="protein sequence ID" value="CAB14175"/>
    <property type="gene ID" value="BSU_22590"/>
</dbReference>
<dbReference type="GeneID" id="939012"/>
<dbReference type="KEGG" id="bsu:BSU22590"/>
<dbReference type="PATRIC" id="fig|224308.179.peg.2463"/>
<dbReference type="eggNOG" id="COG0457">
    <property type="taxonomic scope" value="Bacteria"/>
</dbReference>
<dbReference type="InParanoid" id="P54389"/>
<dbReference type="OrthoDB" id="2080803at2"/>
<dbReference type="PhylomeDB" id="P54389"/>
<dbReference type="BioCyc" id="BSUB:BSU22590-MONOMER"/>
<dbReference type="Proteomes" id="UP000001570">
    <property type="component" value="Chromosome"/>
</dbReference>
<dbReference type="Gene3D" id="1.25.40.10">
    <property type="entry name" value="Tetratricopeptide repeat domain"/>
    <property type="match status" value="2"/>
</dbReference>
<dbReference type="InterPro" id="IPR051012">
    <property type="entry name" value="CellSynth/LPSAsmb/PSIAsmb"/>
</dbReference>
<dbReference type="InterPro" id="IPR011990">
    <property type="entry name" value="TPR-like_helical_dom_sf"/>
</dbReference>
<dbReference type="InterPro" id="IPR019734">
    <property type="entry name" value="TPR_rpt"/>
</dbReference>
<dbReference type="PANTHER" id="PTHR45586">
    <property type="entry name" value="TPR REPEAT-CONTAINING PROTEIN PA4667"/>
    <property type="match status" value="1"/>
</dbReference>
<dbReference type="PANTHER" id="PTHR45586:SF15">
    <property type="entry name" value="TPR REPEAT-CONTAINING PROTEIN YPIA"/>
    <property type="match status" value="1"/>
</dbReference>
<dbReference type="Pfam" id="PF13429">
    <property type="entry name" value="TPR_15"/>
    <property type="match status" value="1"/>
</dbReference>
<dbReference type="Pfam" id="PF14559">
    <property type="entry name" value="TPR_19"/>
    <property type="match status" value="1"/>
</dbReference>
<dbReference type="Pfam" id="PF13181">
    <property type="entry name" value="TPR_8"/>
    <property type="match status" value="1"/>
</dbReference>
<dbReference type="SMART" id="SM00028">
    <property type="entry name" value="TPR"/>
    <property type="match status" value="6"/>
</dbReference>
<dbReference type="SUPFAM" id="SSF48452">
    <property type="entry name" value="TPR-like"/>
    <property type="match status" value="2"/>
</dbReference>
<dbReference type="PROSITE" id="PS50005">
    <property type="entry name" value="TPR"/>
    <property type="match status" value="9"/>
</dbReference>
<dbReference type="PROSITE" id="PS50293">
    <property type="entry name" value="TPR_REGION"/>
    <property type="match status" value="1"/>
</dbReference>
<keyword id="KW-1185">Reference proteome</keyword>
<keyword id="KW-0677">Repeat</keyword>
<keyword id="KW-0802">TPR repeat</keyword>
<protein>
    <recommendedName>
        <fullName>TPR repeat-containing protein YpiA</fullName>
    </recommendedName>
</protein>
<accession>P54389</accession>
<comment type="subunit">
    <text evidence="1">Interacts with the RNA polymerase core.</text>
</comment>
<sequence length="423" mass="48321">MNTLIQEAIKLVEAGETEKGLNTLSKAEKQLHDEDKAIAAQLYYEWGDVEKAISLISDLHDLYPNETELTNFYAELLIDIDEEEKALAVLETIPETDPSYPESLLLMADLYQMQGLFEVSEQKLFQAKSILDNEPVIDFALGELYFAQGAYAKAVQYFKTTAEEQSEIGGVNVHQRLAESLSASGEFEDAIPWYEKAVDENPDPNTIFGYGFTALQAGLVKTAIKQLSDLKELDPSYTSLYMPLSKSYEAEGMYEEALKTAKEGIRYDEYNKELFLYAAKMALKIGKSEEGKKLLQEALALDPGFVEALHTLLAVYHKEEDYDQIIDLIQEVRSYGEEDPKYNWYLASAYTELEQYEEAKQSFEAAYLHYREDRDFLYEYASFLLEEGLQKEALPLLKKVLEMDGANEELEETILRIEDEFSR</sequence>
<feature type="chain" id="PRO_0000049699" description="TPR repeat-containing protein YpiA">
    <location>
        <begin position="1"/>
        <end position="423"/>
    </location>
</feature>
<feature type="repeat" description="TPR 1">
    <location>
        <begin position="33"/>
        <end position="66"/>
    </location>
</feature>
<feature type="repeat" description="TPR 2">
    <location>
        <begin position="67"/>
        <end position="100"/>
    </location>
</feature>
<feature type="repeat" description="TPR 3">
    <location>
        <begin position="135"/>
        <end position="168"/>
    </location>
</feature>
<feature type="repeat" description="TPR 4">
    <location>
        <begin position="171"/>
        <end position="204"/>
    </location>
</feature>
<feature type="repeat" description="TPR 5">
    <location>
        <begin position="238"/>
        <end position="271"/>
    </location>
</feature>
<feature type="repeat" description="TPR 6">
    <location>
        <begin position="272"/>
        <end position="305"/>
    </location>
</feature>
<feature type="repeat" description="TPR 7">
    <location>
        <begin position="306"/>
        <end position="339"/>
    </location>
</feature>
<feature type="repeat" description="TPR 8">
    <location>
        <begin position="340"/>
        <end position="373"/>
    </location>
</feature>
<feature type="repeat" description="TPR 9">
    <location>
        <begin position="374"/>
        <end position="407"/>
    </location>
</feature>
<organism>
    <name type="scientific">Bacillus subtilis (strain 168)</name>
    <dbReference type="NCBI Taxonomy" id="224308"/>
    <lineage>
        <taxon>Bacteria</taxon>
        <taxon>Bacillati</taxon>
        <taxon>Bacillota</taxon>
        <taxon>Bacilli</taxon>
        <taxon>Bacillales</taxon>
        <taxon>Bacillaceae</taxon>
        <taxon>Bacillus</taxon>
    </lineage>
</organism>